<proteinExistence type="inferred from homology"/>
<dbReference type="EC" id="2.4.1.227" evidence="1"/>
<dbReference type="EMBL" id="CP000514">
    <property type="protein sequence ID" value="ABM19527.1"/>
    <property type="molecule type" value="Genomic_DNA"/>
</dbReference>
<dbReference type="RefSeq" id="WP_011785911.1">
    <property type="nucleotide sequence ID" value="NC_008740.1"/>
</dbReference>
<dbReference type="SMR" id="A1U3F8"/>
<dbReference type="STRING" id="351348.Maqu_2452"/>
<dbReference type="CAZy" id="GT28">
    <property type="family name" value="Glycosyltransferase Family 28"/>
</dbReference>
<dbReference type="KEGG" id="maq:Maqu_2452"/>
<dbReference type="eggNOG" id="COG0707">
    <property type="taxonomic scope" value="Bacteria"/>
</dbReference>
<dbReference type="HOGENOM" id="CLU_037404_2_0_6"/>
<dbReference type="OrthoDB" id="9808936at2"/>
<dbReference type="UniPathway" id="UPA00219"/>
<dbReference type="Proteomes" id="UP000000998">
    <property type="component" value="Chromosome"/>
</dbReference>
<dbReference type="GO" id="GO:0005886">
    <property type="term" value="C:plasma membrane"/>
    <property type="evidence" value="ECO:0007669"/>
    <property type="project" value="UniProtKB-SubCell"/>
</dbReference>
<dbReference type="GO" id="GO:0051991">
    <property type="term" value="F:UDP-N-acetyl-D-glucosamine:N-acetylmuramoyl-L-alanyl-D-glutamyl-meso-2,6-diaminopimelyl-D-alanyl-D-alanine-diphosphoundecaprenol 4-beta-N-acetylglucosaminlytransferase activity"/>
    <property type="evidence" value="ECO:0007669"/>
    <property type="project" value="RHEA"/>
</dbReference>
<dbReference type="GO" id="GO:0050511">
    <property type="term" value="F:undecaprenyldiphospho-muramoylpentapeptide beta-N-acetylglucosaminyltransferase activity"/>
    <property type="evidence" value="ECO:0007669"/>
    <property type="project" value="UniProtKB-UniRule"/>
</dbReference>
<dbReference type="GO" id="GO:0005975">
    <property type="term" value="P:carbohydrate metabolic process"/>
    <property type="evidence" value="ECO:0007669"/>
    <property type="project" value="InterPro"/>
</dbReference>
<dbReference type="GO" id="GO:0051301">
    <property type="term" value="P:cell division"/>
    <property type="evidence" value="ECO:0007669"/>
    <property type="project" value="UniProtKB-KW"/>
</dbReference>
<dbReference type="GO" id="GO:0071555">
    <property type="term" value="P:cell wall organization"/>
    <property type="evidence" value="ECO:0007669"/>
    <property type="project" value="UniProtKB-KW"/>
</dbReference>
<dbReference type="GO" id="GO:0030259">
    <property type="term" value="P:lipid glycosylation"/>
    <property type="evidence" value="ECO:0007669"/>
    <property type="project" value="UniProtKB-UniRule"/>
</dbReference>
<dbReference type="GO" id="GO:0009252">
    <property type="term" value="P:peptidoglycan biosynthetic process"/>
    <property type="evidence" value="ECO:0007669"/>
    <property type="project" value="UniProtKB-UniRule"/>
</dbReference>
<dbReference type="GO" id="GO:0008360">
    <property type="term" value="P:regulation of cell shape"/>
    <property type="evidence" value="ECO:0007669"/>
    <property type="project" value="UniProtKB-KW"/>
</dbReference>
<dbReference type="CDD" id="cd03785">
    <property type="entry name" value="GT28_MurG"/>
    <property type="match status" value="1"/>
</dbReference>
<dbReference type="Gene3D" id="3.40.50.2000">
    <property type="entry name" value="Glycogen Phosphorylase B"/>
    <property type="match status" value="2"/>
</dbReference>
<dbReference type="HAMAP" id="MF_00033">
    <property type="entry name" value="MurG"/>
    <property type="match status" value="1"/>
</dbReference>
<dbReference type="InterPro" id="IPR006009">
    <property type="entry name" value="GlcNAc_MurG"/>
</dbReference>
<dbReference type="InterPro" id="IPR007235">
    <property type="entry name" value="Glyco_trans_28_C"/>
</dbReference>
<dbReference type="InterPro" id="IPR004276">
    <property type="entry name" value="GlycoTrans_28_N"/>
</dbReference>
<dbReference type="InterPro" id="IPR006311">
    <property type="entry name" value="TAT_signal"/>
</dbReference>
<dbReference type="NCBIfam" id="TIGR01133">
    <property type="entry name" value="murG"/>
    <property type="match status" value="1"/>
</dbReference>
<dbReference type="PANTHER" id="PTHR21015:SF22">
    <property type="entry name" value="GLYCOSYLTRANSFERASE"/>
    <property type="match status" value="1"/>
</dbReference>
<dbReference type="PANTHER" id="PTHR21015">
    <property type="entry name" value="UDP-N-ACETYLGLUCOSAMINE--N-ACETYLMURAMYL-(PENTAPEPTIDE) PYROPHOSPHORYL-UNDECAPRENOL N-ACETYLGLUCOSAMINE TRANSFERASE 1"/>
    <property type="match status" value="1"/>
</dbReference>
<dbReference type="Pfam" id="PF04101">
    <property type="entry name" value="Glyco_tran_28_C"/>
    <property type="match status" value="1"/>
</dbReference>
<dbReference type="Pfam" id="PF03033">
    <property type="entry name" value="Glyco_transf_28"/>
    <property type="match status" value="1"/>
</dbReference>
<dbReference type="SUPFAM" id="SSF53756">
    <property type="entry name" value="UDP-Glycosyltransferase/glycogen phosphorylase"/>
    <property type="match status" value="1"/>
</dbReference>
<comment type="function">
    <text evidence="1">Cell wall formation. Catalyzes the transfer of a GlcNAc subunit on undecaprenyl-pyrophosphoryl-MurNAc-pentapeptide (lipid intermediate I) to form undecaprenyl-pyrophosphoryl-MurNAc-(pentapeptide)GlcNAc (lipid intermediate II).</text>
</comment>
<comment type="catalytic activity">
    <reaction evidence="1">
        <text>di-trans,octa-cis-undecaprenyl diphospho-N-acetyl-alpha-D-muramoyl-L-alanyl-D-glutamyl-meso-2,6-diaminopimeloyl-D-alanyl-D-alanine + UDP-N-acetyl-alpha-D-glucosamine = di-trans,octa-cis-undecaprenyl diphospho-[N-acetyl-alpha-D-glucosaminyl-(1-&gt;4)]-N-acetyl-alpha-D-muramoyl-L-alanyl-D-glutamyl-meso-2,6-diaminopimeloyl-D-alanyl-D-alanine + UDP + H(+)</text>
        <dbReference type="Rhea" id="RHEA:31227"/>
        <dbReference type="ChEBI" id="CHEBI:15378"/>
        <dbReference type="ChEBI" id="CHEBI:57705"/>
        <dbReference type="ChEBI" id="CHEBI:58223"/>
        <dbReference type="ChEBI" id="CHEBI:61387"/>
        <dbReference type="ChEBI" id="CHEBI:61388"/>
        <dbReference type="EC" id="2.4.1.227"/>
    </reaction>
</comment>
<comment type="pathway">
    <text evidence="1">Cell wall biogenesis; peptidoglycan biosynthesis.</text>
</comment>
<comment type="subcellular location">
    <subcellularLocation>
        <location evidence="1">Cell inner membrane</location>
        <topology evidence="1">Peripheral membrane protein</topology>
        <orientation evidence="1">Cytoplasmic side</orientation>
    </subcellularLocation>
</comment>
<comment type="similarity">
    <text evidence="1">Belongs to the glycosyltransferase 28 family. MurG subfamily.</text>
</comment>
<reference key="1">
    <citation type="journal article" date="2011" name="Appl. Environ. Microbiol.">
        <title>Genomic potential of Marinobacter aquaeolei, a biogeochemical 'opportunitroph'.</title>
        <authorList>
            <person name="Singer E."/>
            <person name="Webb E.A."/>
            <person name="Nelson W.C."/>
            <person name="Heidelberg J.F."/>
            <person name="Ivanova N."/>
            <person name="Pati A."/>
            <person name="Edwards K.J."/>
        </authorList>
    </citation>
    <scope>NUCLEOTIDE SEQUENCE [LARGE SCALE GENOMIC DNA]</scope>
    <source>
        <strain>ATCC 700491 / DSM 11845 / VT8</strain>
    </source>
</reference>
<organism>
    <name type="scientific">Marinobacter nauticus (strain ATCC 700491 / DSM 11845 / VT8)</name>
    <name type="common">Marinobacter aquaeolei</name>
    <dbReference type="NCBI Taxonomy" id="351348"/>
    <lineage>
        <taxon>Bacteria</taxon>
        <taxon>Pseudomonadati</taxon>
        <taxon>Pseudomonadota</taxon>
        <taxon>Gammaproteobacteria</taxon>
        <taxon>Pseudomonadales</taxon>
        <taxon>Marinobacteraceae</taxon>
        <taxon>Marinobacter</taxon>
    </lineage>
</organism>
<feature type="chain" id="PRO_0000315115" description="UDP-N-acetylglucosamine--N-acetylmuramyl-(pentapeptide) pyrophosphoryl-undecaprenol N-acetylglucosamine transferase">
    <location>
        <begin position="1"/>
        <end position="363"/>
    </location>
</feature>
<feature type="binding site" evidence="1">
    <location>
        <begin position="16"/>
        <end position="18"/>
    </location>
    <ligand>
        <name>UDP-N-acetyl-alpha-D-glucosamine</name>
        <dbReference type="ChEBI" id="CHEBI:57705"/>
    </ligand>
</feature>
<feature type="binding site" evidence="1">
    <location>
        <position position="128"/>
    </location>
    <ligand>
        <name>UDP-N-acetyl-alpha-D-glucosamine</name>
        <dbReference type="ChEBI" id="CHEBI:57705"/>
    </ligand>
</feature>
<feature type="binding site" evidence="1">
    <location>
        <position position="167"/>
    </location>
    <ligand>
        <name>UDP-N-acetyl-alpha-D-glucosamine</name>
        <dbReference type="ChEBI" id="CHEBI:57705"/>
    </ligand>
</feature>
<feature type="binding site" evidence="1">
    <location>
        <position position="195"/>
    </location>
    <ligand>
        <name>UDP-N-acetyl-alpha-D-glucosamine</name>
        <dbReference type="ChEBI" id="CHEBI:57705"/>
    </ligand>
</feature>
<feature type="binding site" evidence="1">
    <location>
        <position position="249"/>
    </location>
    <ligand>
        <name>UDP-N-acetyl-alpha-D-glucosamine</name>
        <dbReference type="ChEBI" id="CHEBI:57705"/>
    </ligand>
</feature>
<feature type="binding site" evidence="1">
    <location>
        <begin position="268"/>
        <end position="273"/>
    </location>
    <ligand>
        <name>UDP-N-acetyl-alpha-D-glucosamine</name>
        <dbReference type="ChEBI" id="CHEBI:57705"/>
    </ligand>
</feature>
<feature type="binding site" evidence="1">
    <location>
        <position position="294"/>
    </location>
    <ligand>
        <name>UDP-N-acetyl-alpha-D-glucosamine</name>
        <dbReference type="ChEBI" id="CHEBI:57705"/>
    </ligand>
</feature>
<evidence type="ECO:0000255" key="1">
    <source>
        <dbReference type="HAMAP-Rule" id="MF_00033"/>
    </source>
</evidence>
<gene>
    <name evidence="1" type="primary">murG</name>
    <name type="ordered locus">Maqu_2452</name>
</gene>
<keyword id="KW-0131">Cell cycle</keyword>
<keyword id="KW-0132">Cell division</keyword>
<keyword id="KW-0997">Cell inner membrane</keyword>
<keyword id="KW-1003">Cell membrane</keyword>
<keyword id="KW-0133">Cell shape</keyword>
<keyword id="KW-0961">Cell wall biogenesis/degradation</keyword>
<keyword id="KW-0328">Glycosyltransferase</keyword>
<keyword id="KW-0472">Membrane</keyword>
<keyword id="KW-0573">Peptidoglycan synthesis</keyword>
<keyword id="KW-0808">Transferase</keyword>
<protein>
    <recommendedName>
        <fullName evidence="1">UDP-N-acetylglucosamine--N-acetylmuramyl-(pentapeptide) pyrophosphoryl-undecaprenol N-acetylglucosamine transferase</fullName>
        <ecNumber evidence="1">2.4.1.227</ecNumber>
    </recommendedName>
    <alternativeName>
        <fullName evidence="1">Undecaprenyl-PP-MurNAc-pentapeptide-UDPGlcNAc GlcNAc transferase</fullName>
    </alternativeName>
</protein>
<accession>A1U3F8</accession>
<name>MURG_MARN8</name>
<sequence length="363" mass="39029">MTDSPRRRFLMMAGGTGGHVFPALATARALQQRGHEVHWLGASGGMEERLIGDTDIPLSLIHISGLRGKGKLALLLAPFRLMRALGEAYTHLRRIRPDCVVGMGGFVTGPGGIAAWLMRKPLVIHEQNAIAGMTNRWLTRFSETVLEAFPGSFGDQTVTRCTGNPVRGEVASMDEPEQRLAGRSGKLRVLVVGGSLGAQVFNQQLPQALALMPEADRPDVRHQCGEKNLEAAQAAYEEAGVNASVEPFIRDMAEAYGWADLVICRAGALTVSELCAAGIGAILVPFPHAVDDHQTRNGQHMVKAGAAILVPQPRLTPEVLAETLKDLATDRKRILTMAKAARSLARPDATERVVNYCLEAANG</sequence>